<keyword id="KW-0967">Endosome</keyword>
<keyword id="KW-0325">Glycoprotein</keyword>
<keyword id="KW-0378">Hydrolase</keyword>
<keyword id="KW-0472">Membrane</keyword>
<keyword id="KW-1185">Reference proteome</keyword>
<keyword id="KW-0732">Signal</keyword>
<keyword id="KW-0812">Transmembrane</keyword>
<keyword id="KW-1133">Transmembrane helix</keyword>
<name>SIPL5_ORYSJ</name>
<comment type="function">
    <text evidence="1">Intramembrane-cleaving aspartic protease (I-CLiP) that cleaves type II membrane signal peptides in the hydrophobic plane of the membrane.</text>
</comment>
<comment type="subcellular location">
    <subcellularLocation>
        <location evidence="1">Endosome membrane</location>
        <topology evidence="1">Multi-pass membrane protein</topology>
    </subcellularLocation>
</comment>
<comment type="domain">
    <text evidence="1">The PAL motif is required for normal active site conformation.</text>
</comment>
<comment type="PTM">
    <text evidence="1">Glycosylated.</text>
</comment>
<comment type="similarity">
    <text evidence="3">Belongs to the peptidase A22B family.</text>
</comment>
<gene>
    <name type="primary">SPPL5</name>
    <name type="ordered locus">Os06g0730900</name>
    <name type="ordered locus">LOC_Os06g51430</name>
    <name type="ORF">B1206D04.13</name>
    <name type="ORF">OsJ_22746</name>
    <name type="ORF">OSJNBa0069C14.36</name>
</gene>
<evidence type="ECO:0000250" key="1"/>
<evidence type="ECO:0000255" key="2"/>
<evidence type="ECO:0000305" key="3"/>
<reference key="1">
    <citation type="journal article" date="2005" name="Nature">
        <title>The map-based sequence of the rice genome.</title>
        <authorList>
            <consortium name="International rice genome sequencing project (IRGSP)"/>
        </authorList>
    </citation>
    <scope>NUCLEOTIDE SEQUENCE [LARGE SCALE GENOMIC DNA]</scope>
    <source>
        <strain>cv. Nipponbare</strain>
    </source>
</reference>
<reference key="2">
    <citation type="journal article" date="2008" name="Nucleic Acids Res.">
        <title>The rice annotation project database (RAP-DB): 2008 update.</title>
        <authorList>
            <consortium name="The rice annotation project (RAP)"/>
        </authorList>
    </citation>
    <scope>GENOME REANNOTATION</scope>
    <source>
        <strain>cv. Nipponbare</strain>
    </source>
</reference>
<reference key="3">
    <citation type="journal article" date="2013" name="Rice">
        <title>Improvement of the Oryza sativa Nipponbare reference genome using next generation sequence and optical map data.</title>
        <authorList>
            <person name="Kawahara Y."/>
            <person name="de la Bastide M."/>
            <person name="Hamilton J.P."/>
            <person name="Kanamori H."/>
            <person name="McCombie W.R."/>
            <person name="Ouyang S."/>
            <person name="Schwartz D.C."/>
            <person name="Tanaka T."/>
            <person name="Wu J."/>
            <person name="Zhou S."/>
            <person name="Childs K.L."/>
            <person name="Davidson R.M."/>
            <person name="Lin H."/>
            <person name="Quesada-Ocampo L."/>
            <person name="Vaillancourt B."/>
            <person name="Sakai H."/>
            <person name="Lee S.S."/>
            <person name="Kim J."/>
            <person name="Numa H."/>
            <person name="Itoh T."/>
            <person name="Buell C.R."/>
            <person name="Matsumoto T."/>
        </authorList>
    </citation>
    <scope>GENOME REANNOTATION</scope>
    <source>
        <strain>cv. Nipponbare</strain>
    </source>
</reference>
<reference key="4">
    <citation type="journal article" date="2005" name="PLoS Biol.">
        <title>The genomes of Oryza sativa: a history of duplications.</title>
        <authorList>
            <person name="Yu J."/>
            <person name="Wang J."/>
            <person name="Lin W."/>
            <person name="Li S."/>
            <person name="Li H."/>
            <person name="Zhou J."/>
            <person name="Ni P."/>
            <person name="Dong W."/>
            <person name="Hu S."/>
            <person name="Zeng C."/>
            <person name="Zhang J."/>
            <person name="Zhang Y."/>
            <person name="Li R."/>
            <person name="Xu Z."/>
            <person name="Li S."/>
            <person name="Li X."/>
            <person name="Zheng H."/>
            <person name="Cong L."/>
            <person name="Lin L."/>
            <person name="Yin J."/>
            <person name="Geng J."/>
            <person name="Li G."/>
            <person name="Shi J."/>
            <person name="Liu J."/>
            <person name="Lv H."/>
            <person name="Li J."/>
            <person name="Wang J."/>
            <person name="Deng Y."/>
            <person name="Ran L."/>
            <person name="Shi X."/>
            <person name="Wang X."/>
            <person name="Wu Q."/>
            <person name="Li C."/>
            <person name="Ren X."/>
            <person name="Wang J."/>
            <person name="Wang X."/>
            <person name="Li D."/>
            <person name="Liu D."/>
            <person name="Zhang X."/>
            <person name="Ji Z."/>
            <person name="Zhao W."/>
            <person name="Sun Y."/>
            <person name="Zhang Z."/>
            <person name="Bao J."/>
            <person name="Han Y."/>
            <person name="Dong L."/>
            <person name="Ji J."/>
            <person name="Chen P."/>
            <person name="Wu S."/>
            <person name="Liu J."/>
            <person name="Xiao Y."/>
            <person name="Bu D."/>
            <person name="Tan J."/>
            <person name="Yang L."/>
            <person name="Ye C."/>
            <person name="Zhang J."/>
            <person name="Xu J."/>
            <person name="Zhou Y."/>
            <person name="Yu Y."/>
            <person name="Zhang B."/>
            <person name="Zhuang S."/>
            <person name="Wei H."/>
            <person name="Liu B."/>
            <person name="Lei M."/>
            <person name="Yu H."/>
            <person name="Li Y."/>
            <person name="Xu H."/>
            <person name="Wei S."/>
            <person name="He X."/>
            <person name="Fang L."/>
            <person name="Zhang Z."/>
            <person name="Zhang Y."/>
            <person name="Huang X."/>
            <person name="Su Z."/>
            <person name="Tong W."/>
            <person name="Li J."/>
            <person name="Tong Z."/>
            <person name="Li S."/>
            <person name="Ye J."/>
            <person name="Wang L."/>
            <person name="Fang L."/>
            <person name="Lei T."/>
            <person name="Chen C.-S."/>
            <person name="Chen H.-C."/>
            <person name="Xu Z."/>
            <person name="Li H."/>
            <person name="Huang H."/>
            <person name="Zhang F."/>
            <person name="Xu H."/>
            <person name="Li N."/>
            <person name="Zhao C."/>
            <person name="Li S."/>
            <person name="Dong L."/>
            <person name="Huang Y."/>
            <person name="Li L."/>
            <person name="Xi Y."/>
            <person name="Qi Q."/>
            <person name="Li W."/>
            <person name="Zhang B."/>
            <person name="Hu W."/>
            <person name="Zhang Y."/>
            <person name="Tian X."/>
            <person name="Jiao Y."/>
            <person name="Liang X."/>
            <person name="Jin J."/>
            <person name="Gao L."/>
            <person name="Zheng W."/>
            <person name="Hao B."/>
            <person name="Liu S.-M."/>
            <person name="Wang W."/>
            <person name="Yuan L."/>
            <person name="Cao M."/>
            <person name="McDermott J."/>
            <person name="Samudrala R."/>
            <person name="Wang J."/>
            <person name="Wong G.K.-S."/>
            <person name="Yang H."/>
        </authorList>
    </citation>
    <scope>NUCLEOTIDE SEQUENCE [LARGE SCALE GENOMIC DNA]</scope>
    <source>
        <strain>cv. Nipponbare</strain>
    </source>
</reference>
<reference key="5">
    <citation type="journal article" date="2003" name="Science">
        <title>Collection, mapping, and annotation of over 28,000 cDNA clones from japonica rice.</title>
        <authorList>
            <consortium name="The rice full-length cDNA consortium"/>
        </authorList>
    </citation>
    <scope>NUCLEOTIDE SEQUENCE [LARGE SCALE MRNA]</scope>
    <source>
        <strain>cv. Nipponbare</strain>
    </source>
</reference>
<reference key="6">
    <citation type="journal article" date="2009" name="Plant Cell Rep.">
        <title>Signal peptide peptidases are expressed in the shoot apex of rice, localized to the endoplasmic reticulum.</title>
        <authorList>
            <person name="Tamura T."/>
            <person name="Kuroda M."/>
            <person name="Oikawa T."/>
            <person name="Kyozuka J."/>
            <person name="Terauchi K."/>
            <person name="Ishimaru Y."/>
            <person name="Abe K."/>
            <person name="Asakura T."/>
        </authorList>
    </citation>
    <scope>GENE FAMILY</scope>
    <scope>NOMENCLATURE</scope>
</reference>
<proteinExistence type="evidence at transcript level"/>
<accession>Q5Z413</accession>
<accession>A0A0P0X1I0</accession>
<feature type="signal peptide" evidence="2">
    <location>
        <begin position="1"/>
        <end position="23"/>
    </location>
</feature>
<feature type="chain" id="PRO_0000419104" description="Signal peptide peptidase-like 5">
    <location>
        <begin position="24"/>
        <end position="542"/>
    </location>
</feature>
<feature type="topological domain" description="Lumenal" evidence="2">
    <location>
        <begin position="24"/>
        <end position="192"/>
    </location>
</feature>
<feature type="transmembrane region" description="Helical" evidence="2">
    <location>
        <begin position="193"/>
        <end position="213"/>
    </location>
</feature>
<feature type="topological domain" description="Cytoplasmic" evidence="2">
    <location>
        <begin position="214"/>
        <end position="245"/>
    </location>
</feature>
<feature type="transmembrane region" description="Helical" evidence="2">
    <location>
        <begin position="246"/>
        <end position="266"/>
    </location>
</feature>
<feature type="topological domain" description="Lumenal" evidence="2">
    <location>
        <begin position="267"/>
        <end position="275"/>
    </location>
</feature>
<feature type="transmembrane region" description="Helical" evidence="2">
    <location>
        <begin position="276"/>
        <end position="296"/>
    </location>
</feature>
<feature type="topological domain" description="Cytoplasmic" evidence="2">
    <location>
        <begin position="297"/>
        <end position="316"/>
    </location>
</feature>
<feature type="transmembrane region" description="Helical" evidence="2">
    <location>
        <begin position="317"/>
        <end position="337"/>
    </location>
</feature>
<feature type="topological domain" description="Lumenal" evidence="2">
    <location>
        <begin position="338"/>
        <end position="342"/>
    </location>
</feature>
<feature type="transmembrane region" description="Helical" evidence="2">
    <location>
        <begin position="343"/>
        <end position="363"/>
    </location>
</feature>
<feature type="topological domain" description="Cytoplasmic" evidence="2">
    <location>
        <begin position="364"/>
        <end position="367"/>
    </location>
</feature>
<feature type="transmembrane region" description="Helical" evidence="2">
    <location>
        <begin position="368"/>
        <end position="388"/>
    </location>
</feature>
<feature type="topological domain" description="Lumenal" evidence="2">
    <location>
        <begin position="389"/>
        <end position="426"/>
    </location>
</feature>
<feature type="transmembrane region" description="Helical" evidence="2">
    <location>
        <begin position="427"/>
        <end position="447"/>
    </location>
</feature>
<feature type="topological domain" description="Cytoplasmic" evidence="2">
    <location>
        <begin position="448"/>
        <end position="459"/>
    </location>
</feature>
<feature type="transmembrane region" description="Helical" evidence="2">
    <location>
        <begin position="460"/>
        <end position="480"/>
    </location>
</feature>
<feature type="topological domain" description="Lumenal" evidence="2">
    <location>
        <begin position="481"/>
        <end position="486"/>
    </location>
</feature>
<feature type="transmembrane region" description="Helical" evidence="2">
    <location>
        <begin position="487"/>
        <end position="507"/>
    </location>
</feature>
<feature type="topological domain" description="Cytoplasmic" evidence="2">
    <location>
        <begin position="508"/>
        <end position="542"/>
    </location>
</feature>
<feature type="domain" description="PA">
    <location>
        <begin position="92"/>
        <end position="167"/>
    </location>
</feature>
<feature type="short sequence motif" description="PAL">
    <location>
        <begin position="489"/>
        <end position="491"/>
    </location>
</feature>
<feature type="active site" evidence="1">
    <location>
        <position position="382"/>
    </location>
</feature>
<feature type="active site" evidence="1">
    <location>
        <position position="435"/>
    </location>
</feature>
<feature type="glycosylation site" description="N-linked (GlcNAc...) asparagine" evidence="2">
    <location>
        <position position="79"/>
    </location>
</feature>
<feature type="glycosylation site" description="N-linked (GlcNAc...) asparagine" evidence="2">
    <location>
        <position position="145"/>
    </location>
</feature>
<organism>
    <name type="scientific">Oryza sativa subsp. japonica</name>
    <name type="common">Rice</name>
    <dbReference type="NCBI Taxonomy" id="39947"/>
    <lineage>
        <taxon>Eukaryota</taxon>
        <taxon>Viridiplantae</taxon>
        <taxon>Streptophyta</taxon>
        <taxon>Embryophyta</taxon>
        <taxon>Tracheophyta</taxon>
        <taxon>Spermatophyta</taxon>
        <taxon>Magnoliopsida</taxon>
        <taxon>Liliopsida</taxon>
        <taxon>Poales</taxon>
        <taxon>Poaceae</taxon>
        <taxon>BOP clade</taxon>
        <taxon>Oryzoideae</taxon>
        <taxon>Oryzeae</taxon>
        <taxon>Oryzinae</taxon>
        <taxon>Oryza</taxon>
        <taxon>Oryza sativa</taxon>
    </lineage>
</organism>
<sequence length="542" mass="59696">MAAATAAVFALLMASALAGAAAGGDIVHHDDEAPKIPGCSNDFILVKVQSWVNGKEDDEYVGVGARFGPQIVSKEKHANRTRLMLADPIDCCTSPKEKVSGDILLVQRGKCKFTKKAKFAEAAGASGIIIINHVHELYKMVCEKNETDLDINIPAVLLPRDAGFALHTVLTSGNSVSVQQYSPDRPVVDTAEVFLWLMAVGTVLCASYWSAWSAREALCEQEKLLKDGREVLLNVENGSSSGMIDINVASAIMFVVVASCFLIMLYKMMSSWFVELLVVIFCVGGVEGLQTCLVALLSRWFRAASESFFKVPFFGAVSYLTLAVSPFCIVFAVLWAVHRHFTYAWIGQDILGIALIITVIQIVRVPNLKVGSVLLSCAFFYDIFWVFVSKRWFHESVMIVVARGDKTDEDGVPMLLKIPRMFDPWGGYSIIGFGDILLPGLLVAFALRYDWAAKKSLQTGYFLWSMVAYGSGLLITYVALNLMDGHGQPALLYIVPFTLGALISLGWKRGELWNLWSKGEPERVCPHHMHMQPQPKTPPLVQ</sequence>
<dbReference type="EC" id="3.4.23.-"/>
<dbReference type="EMBL" id="AP005750">
    <property type="protein sequence ID" value="BAD62128.1"/>
    <property type="molecule type" value="Genomic_DNA"/>
</dbReference>
<dbReference type="EMBL" id="AP006616">
    <property type="protein sequence ID" value="BAD62487.1"/>
    <property type="molecule type" value="Genomic_DNA"/>
</dbReference>
<dbReference type="EMBL" id="AP008212">
    <property type="protein sequence ID" value="BAF20573.1"/>
    <property type="molecule type" value="Genomic_DNA"/>
</dbReference>
<dbReference type="EMBL" id="AP014962">
    <property type="protein sequence ID" value="BAS99650.1"/>
    <property type="molecule type" value="Genomic_DNA"/>
</dbReference>
<dbReference type="EMBL" id="CM000143">
    <property type="protein sequence ID" value="EEE66404.1"/>
    <property type="molecule type" value="Genomic_DNA"/>
</dbReference>
<dbReference type="EMBL" id="AK062118">
    <property type="protein sequence ID" value="BAG88222.1"/>
    <property type="molecule type" value="mRNA"/>
</dbReference>
<dbReference type="EMBL" id="AK065172">
    <property type="protein sequence ID" value="BAG89399.1"/>
    <property type="molecule type" value="mRNA"/>
</dbReference>
<dbReference type="RefSeq" id="XP_015642991.1">
    <property type="nucleotide sequence ID" value="XM_015787505.1"/>
</dbReference>
<dbReference type="SMR" id="Q5Z413"/>
<dbReference type="FunCoup" id="Q5Z413">
    <property type="interactions" value="775"/>
</dbReference>
<dbReference type="MEROPS" id="A22.A05"/>
<dbReference type="GlyCosmos" id="Q5Z413">
    <property type="glycosylation" value="2 sites, No reported glycans"/>
</dbReference>
<dbReference type="PaxDb" id="39947-Q5Z413"/>
<dbReference type="EnsemblPlants" id="Os06t0730900-01">
    <property type="protein sequence ID" value="Os06t0730900-01"/>
    <property type="gene ID" value="Os06g0730900"/>
</dbReference>
<dbReference type="EnsemblPlants" id="Os06t0730900-02">
    <property type="protein sequence ID" value="Os06t0730900-02"/>
    <property type="gene ID" value="Os06g0730900"/>
</dbReference>
<dbReference type="EnsemblPlants" id="Os06t0730900-03">
    <property type="protein sequence ID" value="Os06t0730900-03"/>
    <property type="gene ID" value="Os06g0730900"/>
</dbReference>
<dbReference type="Gramene" id="Os06t0730900-01">
    <property type="protein sequence ID" value="Os06t0730900-01"/>
    <property type="gene ID" value="Os06g0730900"/>
</dbReference>
<dbReference type="Gramene" id="Os06t0730900-02">
    <property type="protein sequence ID" value="Os06t0730900-02"/>
    <property type="gene ID" value="Os06g0730900"/>
</dbReference>
<dbReference type="Gramene" id="Os06t0730900-03">
    <property type="protein sequence ID" value="Os06t0730900-03"/>
    <property type="gene ID" value="Os06g0730900"/>
</dbReference>
<dbReference type="KEGG" id="dosa:Os06g0730900"/>
<dbReference type="eggNOG" id="KOG2442">
    <property type="taxonomic scope" value="Eukaryota"/>
</dbReference>
<dbReference type="HOGENOM" id="CLU_023799_4_1_1"/>
<dbReference type="InParanoid" id="Q5Z413"/>
<dbReference type="OMA" id="KNANQTR"/>
<dbReference type="OrthoDB" id="29661at2759"/>
<dbReference type="Proteomes" id="UP000000763">
    <property type="component" value="Chromosome 6"/>
</dbReference>
<dbReference type="Proteomes" id="UP000007752">
    <property type="component" value="Chromosome 6"/>
</dbReference>
<dbReference type="Proteomes" id="UP000059680">
    <property type="component" value="Chromosome 6"/>
</dbReference>
<dbReference type="GO" id="GO:0098554">
    <property type="term" value="C:cytoplasmic side of endoplasmic reticulum membrane"/>
    <property type="evidence" value="ECO:0000318"/>
    <property type="project" value="GO_Central"/>
</dbReference>
<dbReference type="GO" id="GO:0010008">
    <property type="term" value="C:endosome membrane"/>
    <property type="evidence" value="ECO:0007669"/>
    <property type="project" value="UniProtKB-SubCell"/>
</dbReference>
<dbReference type="GO" id="GO:0030660">
    <property type="term" value="C:Golgi-associated vesicle membrane"/>
    <property type="evidence" value="ECO:0000318"/>
    <property type="project" value="GO_Central"/>
</dbReference>
<dbReference type="GO" id="GO:0098553">
    <property type="term" value="C:lumenal side of endoplasmic reticulum membrane"/>
    <property type="evidence" value="ECO:0000318"/>
    <property type="project" value="GO_Central"/>
</dbReference>
<dbReference type="GO" id="GO:0005765">
    <property type="term" value="C:lysosomal membrane"/>
    <property type="evidence" value="ECO:0000318"/>
    <property type="project" value="GO_Central"/>
</dbReference>
<dbReference type="GO" id="GO:0042500">
    <property type="term" value="F:aspartic endopeptidase activity, intramembrane cleaving"/>
    <property type="evidence" value="ECO:0000318"/>
    <property type="project" value="GO_Central"/>
</dbReference>
<dbReference type="GO" id="GO:0033619">
    <property type="term" value="P:membrane protein proteolysis"/>
    <property type="evidence" value="ECO:0000318"/>
    <property type="project" value="GO_Central"/>
</dbReference>
<dbReference type="CDD" id="cd02132">
    <property type="entry name" value="PA_GO-like"/>
    <property type="match status" value="1"/>
</dbReference>
<dbReference type="FunFam" id="3.50.30.30:FF:000007">
    <property type="entry name" value="Signal peptide peptidase-like 3"/>
    <property type="match status" value="1"/>
</dbReference>
<dbReference type="Gene3D" id="3.50.30.30">
    <property type="match status" value="1"/>
</dbReference>
<dbReference type="InterPro" id="IPR046450">
    <property type="entry name" value="PA_dom_sf"/>
</dbReference>
<dbReference type="InterPro" id="IPR003137">
    <property type="entry name" value="PA_domain"/>
</dbReference>
<dbReference type="InterPro" id="IPR007369">
    <property type="entry name" value="Peptidase_A22B_SPP"/>
</dbReference>
<dbReference type="InterPro" id="IPR006639">
    <property type="entry name" value="Preselin/SPP"/>
</dbReference>
<dbReference type="PANTHER" id="PTHR12174">
    <property type="entry name" value="SIGNAL PEPTIDE PEPTIDASE"/>
    <property type="match status" value="1"/>
</dbReference>
<dbReference type="PANTHER" id="PTHR12174:SF62">
    <property type="entry name" value="SIGNAL PEPTIDE PEPTIDASE-LIKE 5"/>
    <property type="match status" value="1"/>
</dbReference>
<dbReference type="Pfam" id="PF02225">
    <property type="entry name" value="PA"/>
    <property type="match status" value="1"/>
</dbReference>
<dbReference type="Pfam" id="PF04258">
    <property type="entry name" value="Peptidase_A22B"/>
    <property type="match status" value="1"/>
</dbReference>
<dbReference type="SMART" id="SM00730">
    <property type="entry name" value="PSN"/>
    <property type="match status" value="1"/>
</dbReference>
<dbReference type="SUPFAM" id="SSF52025">
    <property type="entry name" value="PA domain"/>
    <property type="match status" value="1"/>
</dbReference>
<protein>
    <recommendedName>
        <fullName>Signal peptide peptidase-like 5</fullName>
        <shortName>OsSPPL5</shortName>
        <ecNumber>3.4.23.-</ecNumber>
    </recommendedName>
</protein>